<name>Y1961_AGARV</name>
<organism>
    <name type="scientific">Agathobacter rectalis (strain ATCC 33656 / DSM 3377 / JCM 17463 / KCTC 5835 / VPI 0990)</name>
    <name type="common">Eubacterium rectale</name>
    <dbReference type="NCBI Taxonomy" id="515619"/>
    <lineage>
        <taxon>Bacteria</taxon>
        <taxon>Bacillati</taxon>
        <taxon>Bacillota</taxon>
        <taxon>Clostridia</taxon>
        <taxon>Lachnospirales</taxon>
        <taxon>Lachnospiraceae</taxon>
        <taxon>Agathobacter</taxon>
    </lineage>
</organism>
<sequence length="242" mass="26206">MSGHSKFANIKHKKEKNDAAKGKIFTMIGRELAVAVKEGGPDPANNFKLAQVVAKAKANNMPNDTIERGIKKAAGDGNSVNYETATYEGYGPSGTAIIVKCLTDNKNRTAANVRNAFTKGQGSIGTQGCVSYMFDEKGQIIIDKEECDMDADDLMMQALDAGAEDFADEDDSYEITTAPADFDAVRAALEEAGITMASAEVTMIPQTYVTLTDEADITNIGRILDLLDDDDDVQEVYHNWEE</sequence>
<evidence type="ECO:0000255" key="1">
    <source>
        <dbReference type="HAMAP-Rule" id="MF_00693"/>
    </source>
</evidence>
<reference key="1">
    <citation type="journal article" date="2009" name="Proc. Natl. Acad. Sci. U.S.A.">
        <title>Characterizing a model human gut microbiota composed of members of its two dominant bacterial phyla.</title>
        <authorList>
            <person name="Mahowald M.A."/>
            <person name="Rey F.E."/>
            <person name="Seedorf H."/>
            <person name="Turnbaugh P.J."/>
            <person name="Fulton R.S."/>
            <person name="Wollam A."/>
            <person name="Shah N."/>
            <person name="Wang C."/>
            <person name="Magrini V."/>
            <person name="Wilson R.K."/>
            <person name="Cantarel B.L."/>
            <person name="Coutinho P.M."/>
            <person name="Henrissat B."/>
            <person name="Crock L.W."/>
            <person name="Russell A."/>
            <person name="Verberkmoes N.C."/>
            <person name="Hettich R.L."/>
            <person name="Gordon J.I."/>
        </authorList>
    </citation>
    <scope>NUCLEOTIDE SEQUENCE [LARGE SCALE GENOMIC DNA]</scope>
    <source>
        <strain>ATCC 33656 / DSM 3377 / JCM 17463 / KCTC 5835 / LMG 30912 / VPI 0990</strain>
    </source>
</reference>
<protein>
    <recommendedName>
        <fullName evidence="1">Probable transcriptional regulatory protein EUBREC_1961</fullName>
    </recommendedName>
</protein>
<proteinExistence type="inferred from homology"/>
<comment type="subcellular location">
    <subcellularLocation>
        <location evidence="1">Cytoplasm</location>
    </subcellularLocation>
</comment>
<comment type="similarity">
    <text evidence="1">Belongs to the TACO1 family.</text>
</comment>
<feature type="chain" id="PRO_1000212608" description="Probable transcriptional regulatory protein EUBREC_1961">
    <location>
        <begin position="1"/>
        <end position="242"/>
    </location>
</feature>
<accession>C4ZBH1</accession>
<gene>
    <name type="ordered locus">EUBREC_1961</name>
</gene>
<keyword id="KW-0963">Cytoplasm</keyword>
<keyword id="KW-0238">DNA-binding</keyword>
<keyword id="KW-0804">Transcription</keyword>
<keyword id="KW-0805">Transcription regulation</keyword>
<dbReference type="EMBL" id="CP001107">
    <property type="protein sequence ID" value="ACR75703.1"/>
    <property type="molecule type" value="Genomic_DNA"/>
</dbReference>
<dbReference type="RefSeq" id="WP_012742800.1">
    <property type="nucleotide sequence ID" value="NC_012781.1"/>
</dbReference>
<dbReference type="SMR" id="C4ZBH1"/>
<dbReference type="STRING" id="515619.EUBREC_1961"/>
<dbReference type="PaxDb" id="515619-EUBREC_1961"/>
<dbReference type="KEGG" id="ere:EUBREC_1961"/>
<dbReference type="HOGENOM" id="CLU_062974_2_2_9"/>
<dbReference type="Proteomes" id="UP000001477">
    <property type="component" value="Chromosome"/>
</dbReference>
<dbReference type="GO" id="GO:0005829">
    <property type="term" value="C:cytosol"/>
    <property type="evidence" value="ECO:0007669"/>
    <property type="project" value="TreeGrafter"/>
</dbReference>
<dbReference type="GO" id="GO:0003677">
    <property type="term" value="F:DNA binding"/>
    <property type="evidence" value="ECO:0007669"/>
    <property type="project" value="UniProtKB-UniRule"/>
</dbReference>
<dbReference type="GO" id="GO:0006355">
    <property type="term" value="P:regulation of DNA-templated transcription"/>
    <property type="evidence" value="ECO:0007669"/>
    <property type="project" value="UniProtKB-UniRule"/>
</dbReference>
<dbReference type="FunFam" id="1.10.10.200:FF:000002">
    <property type="entry name" value="Probable transcriptional regulatory protein CLM62_37755"/>
    <property type="match status" value="1"/>
</dbReference>
<dbReference type="FunFam" id="3.30.70.980:FF:000002">
    <property type="entry name" value="Probable transcriptional regulatory protein YebC"/>
    <property type="match status" value="1"/>
</dbReference>
<dbReference type="Gene3D" id="1.10.10.200">
    <property type="match status" value="1"/>
</dbReference>
<dbReference type="Gene3D" id="3.30.70.980">
    <property type="match status" value="2"/>
</dbReference>
<dbReference type="HAMAP" id="MF_00693">
    <property type="entry name" value="Transcrip_reg_TACO1"/>
    <property type="match status" value="1"/>
</dbReference>
<dbReference type="InterPro" id="IPR017856">
    <property type="entry name" value="Integrase-like_N"/>
</dbReference>
<dbReference type="InterPro" id="IPR048300">
    <property type="entry name" value="TACO1_YebC-like_2nd/3rd_dom"/>
</dbReference>
<dbReference type="InterPro" id="IPR049083">
    <property type="entry name" value="TACO1_YebC_N"/>
</dbReference>
<dbReference type="InterPro" id="IPR002876">
    <property type="entry name" value="Transcrip_reg_TACO1-like"/>
</dbReference>
<dbReference type="InterPro" id="IPR026564">
    <property type="entry name" value="Transcrip_reg_TACO1-like_dom3"/>
</dbReference>
<dbReference type="InterPro" id="IPR029072">
    <property type="entry name" value="YebC-like"/>
</dbReference>
<dbReference type="NCBIfam" id="NF001030">
    <property type="entry name" value="PRK00110.1"/>
    <property type="match status" value="1"/>
</dbReference>
<dbReference type="NCBIfam" id="NF009044">
    <property type="entry name" value="PRK12378.1"/>
    <property type="match status" value="1"/>
</dbReference>
<dbReference type="NCBIfam" id="TIGR01033">
    <property type="entry name" value="YebC/PmpR family DNA-binding transcriptional regulator"/>
    <property type="match status" value="1"/>
</dbReference>
<dbReference type="PANTHER" id="PTHR12532:SF6">
    <property type="entry name" value="TRANSCRIPTIONAL REGULATORY PROTEIN YEBC-RELATED"/>
    <property type="match status" value="1"/>
</dbReference>
<dbReference type="PANTHER" id="PTHR12532">
    <property type="entry name" value="TRANSLATIONAL ACTIVATOR OF CYTOCHROME C OXIDASE 1"/>
    <property type="match status" value="1"/>
</dbReference>
<dbReference type="Pfam" id="PF20772">
    <property type="entry name" value="TACO1_YebC_N"/>
    <property type="match status" value="1"/>
</dbReference>
<dbReference type="Pfam" id="PF01709">
    <property type="entry name" value="Transcrip_reg"/>
    <property type="match status" value="1"/>
</dbReference>
<dbReference type="SUPFAM" id="SSF75625">
    <property type="entry name" value="YebC-like"/>
    <property type="match status" value="1"/>
</dbReference>